<name>FBSP1_DROME</name>
<dbReference type="EMBL" id="AE013599">
    <property type="protein sequence ID" value="AAF58404.1"/>
    <property type="molecule type" value="Genomic_DNA"/>
</dbReference>
<dbReference type="EMBL" id="AE013599">
    <property type="protein sequence ID" value="AAM68601.1"/>
    <property type="molecule type" value="Genomic_DNA"/>
</dbReference>
<dbReference type="EMBL" id="AY118594">
    <property type="protein sequence ID" value="AAM49963.1"/>
    <property type="molecule type" value="mRNA"/>
</dbReference>
<dbReference type="RefSeq" id="NP_610849.1">
    <property type="nucleotide sequence ID" value="NM_137005.2"/>
</dbReference>
<dbReference type="RefSeq" id="NP_725266.1">
    <property type="nucleotide sequence ID" value="NM_165973.2"/>
</dbReference>
<dbReference type="SMR" id="Q9V6L9"/>
<dbReference type="BioGRID" id="62223">
    <property type="interactions" value="8"/>
</dbReference>
<dbReference type="FunCoup" id="Q9V6L9">
    <property type="interactions" value="1209"/>
</dbReference>
<dbReference type="IntAct" id="Q9V6L9">
    <property type="interactions" value="16"/>
</dbReference>
<dbReference type="STRING" id="7227.FBpp0086875"/>
<dbReference type="PaxDb" id="7227-FBpp0086875"/>
<dbReference type="EnsemblMetazoa" id="FBtr0087762">
    <property type="protein sequence ID" value="FBpp0086875"/>
    <property type="gene ID" value="FBgn0043010"/>
</dbReference>
<dbReference type="EnsemblMetazoa" id="FBtr0087763">
    <property type="protein sequence ID" value="FBpp0086876"/>
    <property type="gene ID" value="FBgn0043010"/>
</dbReference>
<dbReference type="GeneID" id="36460"/>
<dbReference type="KEGG" id="dme:Dmel_CG4643"/>
<dbReference type="UCSC" id="CG4643-RA">
    <property type="organism name" value="d. melanogaster"/>
</dbReference>
<dbReference type="AGR" id="FB:FBgn0043010"/>
<dbReference type="CTD" id="36460"/>
<dbReference type="FlyBase" id="FBgn0043010">
    <property type="gene designation" value="Fsn"/>
</dbReference>
<dbReference type="VEuPathDB" id="VectorBase:FBgn0043010"/>
<dbReference type="eggNOG" id="KOG3953">
    <property type="taxonomic scope" value="Eukaryota"/>
</dbReference>
<dbReference type="GeneTree" id="ENSGT01030000234629"/>
<dbReference type="HOGENOM" id="CLU_046756_1_0_1"/>
<dbReference type="InParanoid" id="Q9V6L9"/>
<dbReference type="OMA" id="ATKRASM"/>
<dbReference type="OrthoDB" id="2398163at2759"/>
<dbReference type="PhylomeDB" id="Q9V6L9"/>
<dbReference type="SignaLink" id="Q9V6L9"/>
<dbReference type="UniPathway" id="UPA00143"/>
<dbReference type="BioGRID-ORCS" id="36460">
    <property type="hits" value="0 hits in 1 CRISPR screen"/>
</dbReference>
<dbReference type="GenomeRNAi" id="36460"/>
<dbReference type="PRO" id="PR:Q9V6L9"/>
<dbReference type="Proteomes" id="UP000000803">
    <property type="component" value="Chromosome 2R"/>
</dbReference>
<dbReference type="Bgee" id="FBgn0043010">
    <property type="expression patterns" value="Expressed in cleaving embryo and 122 other cell types or tissues"/>
</dbReference>
<dbReference type="GO" id="GO:0030424">
    <property type="term" value="C:axon"/>
    <property type="evidence" value="ECO:0007669"/>
    <property type="project" value="UniProtKB-SubCell"/>
</dbReference>
<dbReference type="GO" id="GO:0005938">
    <property type="term" value="C:cell cortex"/>
    <property type="evidence" value="ECO:0000314"/>
    <property type="project" value="UniProtKB"/>
</dbReference>
<dbReference type="GO" id="GO:0005737">
    <property type="term" value="C:cytoplasm"/>
    <property type="evidence" value="ECO:0000314"/>
    <property type="project" value="FlyBase"/>
</dbReference>
<dbReference type="GO" id="GO:0031594">
    <property type="term" value="C:neuromuscular junction"/>
    <property type="evidence" value="ECO:0000314"/>
    <property type="project" value="UniProtKB"/>
</dbReference>
<dbReference type="GO" id="GO:0005634">
    <property type="term" value="C:nucleus"/>
    <property type="evidence" value="ECO:0000314"/>
    <property type="project" value="UniProtKB"/>
</dbReference>
<dbReference type="GO" id="GO:0043204">
    <property type="term" value="C:perikaryon"/>
    <property type="evidence" value="ECO:0007669"/>
    <property type="project" value="UniProtKB-SubCell"/>
</dbReference>
<dbReference type="GO" id="GO:0045495">
    <property type="term" value="C:pole plasm"/>
    <property type="evidence" value="ECO:0000314"/>
    <property type="project" value="FlyBase"/>
</dbReference>
<dbReference type="GO" id="GO:0019005">
    <property type="term" value="C:SCF ubiquitin ligase complex"/>
    <property type="evidence" value="ECO:0000314"/>
    <property type="project" value="FlyBase"/>
</dbReference>
<dbReference type="GO" id="GO:0045202">
    <property type="term" value="C:synapse"/>
    <property type="evidence" value="ECO:0000318"/>
    <property type="project" value="GO_Central"/>
</dbReference>
<dbReference type="GO" id="GO:0010629">
    <property type="term" value="P:negative regulation of gene expression"/>
    <property type="evidence" value="ECO:0000315"/>
    <property type="project" value="UniProtKB"/>
</dbReference>
<dbReference type="GO" id="GO:0045886">
    <property type="term" value="P:negative regulation of synaptic assembly at neuromuscular junction"/>
    <property type="evidence" value="ECO:0000315"/>
    <property type="project" value="FlyBase"/>
</dbReference>
<dbReference type="GO" id="GO:0007274">
    <property type="term" value="P:neuromuscular synaptic transmission"/>
    <property type="evidence" value="ECO:0000315"/>
    <property type="project" value="FlyBase"/>
</dbReference>
<dbReference type="GO" id="GO:0045732">
    <property type="term" value="P:positive regulation of protein catabolic process"/>
    <property type="evidence" value="ECO:0000315"/>
    <property type="project" value="FlyBase"/>
</dbReference>
<dbReference type="GO" id="GO:0043161">
    <property type="term" value="P:proteasome-mediated ubiquitin-dependent protein catabolic process"/>
    <property type="evidence" value="ECO:0000318"/>
    <property type="project" value="GO_Central"/>
</dbReference>
<dbReference type="GO" id="GO:0016567">
    <property type="term" value="P:protein ubiquitination"/>
    <property type="evidence" value="ECO:0007669"/>
    <property type="project" value="UniProtKB-UniPathway"/>
</dbReference>
<dbReference type="GO" id="GO:0031146">
    <property type="term" value="P:SCF-dependent proteasomal ubiquitin-dependent protein catabolic process"/>
    <property type="evidence" value="ECO:0000255"/>
    <property type="project" value="FlyBase"/>
</dbReference>
<dbReference type="GO" id="GO:0060386">
    <property type="term" value="P:synapse assembly involved in innervation"/>
    <property type="evidence" value="ECO:0000318"/>
    <property type="project" value="GO_Central"/>
</dbReference>
<dbReference type="CDD" id="cd22111">
    <property type="entry name" value="F-box_FBXO45"/>
    <property type="match status" value="1"/>
</dbReference>
<dbReference type="CDD" id="cd12907">
    <property type="entry name" value="SPRY_Fbox"/>
    <property type="match status" value="1"/>
</dbReference>
<dbReference type="FunFam" id="1.20.1280.50:FF:000140">
    <property type="entry name" value="F-box/SPRY domain-containing protein 1"/>
    <property type="match status" value="1"/>
</dbReference>
<dbReference type="FunFam" id="2.60.120.920:FF:000017">
    <property type="entry name" value="F-box/SPRY domain-containing protein 1"/>
    <property type="match status" value="1"/>
</dbReference>
<dbReference type="Gene3D" id="1.20.1280.50">
    <property type="match status" value="1"/>
</dbReference>
<dbReference type="Gene3D" id="2.60.120.920">
    <property type="match status" value="1"/>
</dbReference>
<dbReference type="InterPro" id="IPR001870">
    <property type="entry name" value="B30.2/SPRY"/>
</dbReference>
<dbReference type="InterPro" id="IPR043136">
    <property type="entry name" value="B30.2/SPRY_sf"/>
</dbReference>
<dbReference type="InterPro" id="IPR013320">
    <property type="entry name" value="ConA-like_dom_sf"/>
</dbReference>
<dbReference type="InterPro" id="IPR036047">
    <property type="entry name" value="F-box-like_dom_sf"/>
</dbReference>
<dbReference type="InterPro" id="IPR001810">
    <property type="entry name" value="F-box_dom"/>
</dbReference>
<dbReference type="InterPro" id="IPR050672">
    <property type="entry name" value="FBXO45-Fsn/SPSB_families"/>
</dbReference>
<dbReference type="InterPro" id="IPR003877">
    <property type="entry name" value="SPRY_dom"/>
</dbReference>
<dbReference type="InterPro" id="IPR035784">
    <property type="entry name" value="SPRY_FBXO45"/>
</dbReference>
<dbReference type="PANTHER" id="PTHR12245:SF7">
    <property type="entry name" value="F-BOX_SPRY DOMAIN-CONTAINING PROTEIN 1"/>
    <property type="match status" value="1"/>
</dbReference>
<dbReference type="PANTHER" id="PTHR12245">
    <property type="entry name" value="SPRY DOMAIN CONTAINING SOCS BOX PROTEIN"/>
    <property type="match status" value="1"/>
</dbReference>
<dbReference type="Pfam" id="PF12937">
    <property type="entry name" value="F-box-like"/>
    <property type="match status" value="1"/>
</dbReference>
<dbReference type="Pfam" id="PF00622">
    <property type="entry name" value="SPRY"/>
    <property type="match status" value="1"/>
</dbReference>
<dbReference type="SMART" id="SM00449">
    <property type="entry name" value="SPRY"/>
    <property type="match status" value="1"/>
</dbReference>
<dbReference type="SUPFAM" id="SSF49899">
    <property type="entry name" value="Concanavalin A-like lectins/glucanases"/>
    <property type="match status" value="1"/>
</dbReference>
<dbReference type="SUPFAM" id="SSF81383">
    <property type="entry name" value="F-box domain"/>
    <property type="match status" value="1"/>
</dbReference>
<dbReference type="PROSITE" id="PS50188">
    <property type="entry name" value="B302_SPRY"/>
    <property type="match status" value="1"/>
</dbReference>
<accession>Q9V6L9</accession>
<accession>B7YZR5</accession>
<accession>Q0E992</accession>
<sequence length="255" mass="28832">MVDPVAALCNYNVLEVIFSYLELDDLSHCSQVCKSWYHFLNDENSDVWRWHCLNKLPKESLKSDLLASVSTYKTKLRAYFHAWSPNDCSRNVYIKPNGFTLHRNPVAQSTDAARGKIGFRHGRHTWEVIWEGPLGTVAVIGISTKEAALQCHGYVALLGSDDQSWGWNLVENHLLHNGDMQGSYPLLNNAPKYQVGERIRVILDCEDNTLSFEKNYEFLGVAFRGLPDKKLYPTVSAVYGNTEVSMVYLGTPLDG</sequence>
<organism>
    <name type="scientific">Drosophila melanogaster</name>
    <name type="common">Fruit fly</name>
    <dbReference type="NCBI Taxonomy" id="7227"/>
    <lineage>
        <taxon>Eukaryota</taxon>
        <taxon>Metazoa</taxon>
        <taxon>Ecdysozoa</taxon>
        <taxon>Arthropoda</taxon>
        <taxon>Hexapoda</taxon>
        <taxon>Insecta</taxon>
        <taxon>Pterygota</taxon>
        <taxon>Neoptera</taxon>
        <taxon>Endopterygota</taxon>
        <taxon>Diptera</taxon>
        <taxon>Brachycera</taxon>
        <taxon>Muscomorpha</taxon>
        <taxon>Ephydroidea</taxon>
        <taxon>Drosophilidae</taxon>
        <taxon>Drosophila</taxon>
        <taxon>Sophophora</taxon>
    </lineage>
</organism>
<evidence type="ECO:0000255" key="1"/>
<evidence type="ECO:0000255" key="2">
    <source>
        <dbReference type="PROSITE-ProRule" id="PRU00548"/>
    </source>
</evidence>
<evidence type="ECO:0000269" key="3">
    <source>
    </source>
</evidence>
<evidence type="ECO:0000269" key="4">
    <source>
    </source>
</evidence>
<evidence type="ECO:0000269" key="5">
    <source>
    </source>
</evidence>
<evidence type="ECO:0000269" key="6">
    <source>
    </source>
</evidence>
<evidence type="ECO:0000269" key="7">
    <source>
    </source>
</evidence>
<evidence type="ECO:0000305" key="8"/>
<evidence type="ECO:0000312" key="9">
    <source>
        <dbReference type="EMBL" id="AAM49963.1"/>
    </source>
</evidence>
<evidence type="ECO:0000312" key="10">
    <source>
        <dbReference type="EMBL" id="AAM68601.1"/>
    </source>
</evidence>
<gene>
    <name type="primary">Fsn</name>
    <name type="ORF">CG4643</name>
</gene>
<comment type="function">
    <text evidence="5 6">Required in the presynaptic motoneuron to down-regulate the levels of wnd and restrain synaptic terminal growth at the neuromuscular junction (NMJ). Negatively regulates the localization of vas to the posterior pole of the oocyte. Involved in primordial germ cell formation.</text>
</comment>
<comment type="pathway">
    <text>Protein modification; protein ubiquitination.</text>
</comment>
<comment type="subunit">
    <text evidence="5 6 7">Component of an E3 ubiquitin ligase complex composed of hiw and Fsn (PubMed:17697379, PubMed:21874015). Interacts with Rae1, probably as part of the hiw-Fsn complex (PubMed:21874015). Interacts (via B30.2/SPRY domain) with vas (PubMed:20123973). Interacts with Cul1 (PubMed:20123973).</text>
</comment>
<comment type="interaction">
    <interactant intactId="EBI-126933">
        <id>Q9V6L9</id>
    </interactant>
    <interactant intactId="EBI-180180">
        <id>O77430</id>
        <label>SkpA</label>
    </interactant>
    <organismsDiffer>false</organismsDiffer>
    <experiments>3</experiments>
</comment>
<comment type="interaction">
    <interactant intactId="EBI-126933">
        <id>Q9V6L9</id>
    </interactant>
    <interactant intactId="EBI-133084">
        <id>Q7KJ69</id>
        <label>SkpB</label>
    </interactant>
    <organismsDiffer>false</organismsDiffer>
    <experiments>3</experiments>
</comment>
<comment type="interaction">
    <interactant intactId="EBI-126933">
        <id>Q9V6L9</id>
    </interactant>
    <interactant intactId="EBI-134067">
        <id>P09052</id>
        <label>vas</label>
    </interactant>
    <organismsDiffer>false</organismsDiffer>
    <experiments>2</experiments>
</comment>
<comment type="subcellular location">
    <subcellularLocation>
        <location evidence="6">Cytoplasm</location>
    </subcellularLocation>
    <subcellularLocation>
        <location evidence="5">Nucleus</location>
    </subcellularLocation>
    <subcellularLocation>
        <location evidence="5">Synapse</location>
    </subcellularLocation>
    <subcellularLocation>
        <location evidence="5">Cell projection</location>
        <location evidence="5">Axon</location>
    </subcellularLocation>
    <subcellularLocation>
        <location evidence="5">Perikaryon</location>
    </subcellularLocation>
    <text evidence="6">In mid- to late-stage oocytes, recruited to the pole plasm. This posterior distribution is not maintained in later developmental stages. Some cortical accumulation is observed at mid- to late-stage oocytes. In mature eggs, present at high levels throughout the ooplasm.</text>
</comment>
<comment type="tissue specificity">
    <text evidence="5 6 7">Expressed in nurse cells and oocytes (at protein level) (PubMed:20123973). Expressed in the brain (PubMed:21874015). Expressed in the neuromuscular junction (NMJ) (PubMed:17697379).</text>
</comment>
<comment type="developmental stage">
    <text evidence="6">Expressed in oocytes (at protein level).</text>
</comment>
<comment type="disruption phenotype">
    <text evidence="5">Dramatic overgrowth of synaptic termini, with a large increase in the number of synaptic boutons and branches. Also impaired synaptic transmission.</text>
</comment>
<comment type="similarity">
    <text evidence="8">Belongs to the FBXO45/Fsn family.</text>
</comment>
<protein>
    <recommendedName>
        <fullName>F-box/SPRY domain-containing protein 1</fullName>
        <shortName>DFsn</shortName>
    </recommendedName>
</protein>
<feature type="chain" id="PRO_0000119949" description="F-box/SPRY domain-containing protein 1">
    <location>
        <begin position="1"/>
        <end position="255"/>
    </location>
</feature>
<feature type="domain" description="F-box" evidence="1">
    <location>
        <begin position="3"/>
        <end position="51"/>
    </location>
</feature>
<feature type="domain" description="B30.2/SPRY" evidence="2">
    <location>
        <begin position="61"/>
        <end position="253"/>
    </location>
</feature>
<feature type="mutagenesis site" description="Abolishes interaction with vas." evidence="6">
    <original>Y</original>
    <variation>A</variation>
    <location>
        <position position="239"/>
    </location>
</feature>
<proteinExistence type="evidence at protein level"/>
<keyword id="KW-0966">Cell projection</keyword>
<keyword id="KW-0963">Cytoplasm</keyword>
<keyword id="KW-0217">Developmental protein</keyword>
<keyword id="KW-0903">Direct protein sequencing</keyword>
<keyword id="KW-0524">Neurogenesis</keyword>
<keyword id="KW-0539">Nucleus</keyword>
<keyword id="KW-1185">Reference proteome</keyword>
<keyword id="KW-0770">Synapse</keyword>
<keyword id="KW-0833">Ubl conjugation pathway</keyword>
<reference evidence="10" key="1">
    <citation type="journal article" date="2000" name="Science">
        <title>The genome sequence of Drosophila melanogaster.</title>
        <authorList>
            <person name="Adams M.D."/>
            <person name="Celniker S.E."/>
            <person name="Holt R.A."/>
            <person name="Evans C.A."/>
            <person name="Gocayne J.D."/>
            <person name="Amanatides P.G."/>
            <person name="Scherer S.E."/>
            <person name="Li P.W."/>
            <person name="Hoskins R.A."/>
            <person name="Galle R.F."/>
            <person name="George R.A."/>
            <person name="Lewis S.E."/>
            <person name="Richards S."/>
            <person name="Ashburner M."/>
            <person name="Henderson S.N."/>
            <person name="Sutton G.G."/>
            <person name="Wortman J.R."/>
            <person name="Yandell M.D."/>
            <person name="Zhang Q."/>
            <person name="Chen L.X."/>
            <person name="Brandon R.C."/>
            <person name="Rogers Y.-H.C."/>
            <person name="Blazej R.G."/>
            <person name="Champe M."/>
            <person name="Pfeiffer B.D."/>
            <person name="Wan K.H."/>
            <person name="Doyle C."/>
            <person name="Baxter E.G."/>
            <person name="Helt G."/>
            <person name="Nelson C.R."/>
            <person name="Miklos G.L.G."/>
            <person name="Abril J.F."/>
            <person name="Agbayani A."/>
            <person name="An H.-J."/>
            <person name="Andrews-Pfannkoch C."/>
            <person name="Baldwin D."/>
            <person name="Ballew R.M."/>
            <person name="Basu A."/>
            <person name="Baxendale J."/>
            <person name="Bayraktaroglu L."/>
            <person name="Beasley E.M."/>
            <person name="Beeson K.Y."/>
            <person name="Benos P.V."/>
            <person name="Berman B.P."/>
            <person name="Bhandari D."/>
            <person name="Bolshakov S."/>
            <person name="Borkova D."/>
            <person name="Botchan M.R."/>
            <person name="Bouck J."/>
            <person name="Brokstein P."/>
            <person name="Brottier P."/>
            <person name="Burtis K.C."/>
            <person name="Busam D.A."/>
            <person name="Butler H."/>
            <person name="Cadieu E."/>
            <person name="Center A."/>
            <person name="Chandra I."/>
            <person name="Cherry J.M."/>
            <person name="Cawley S."/>
            <person name="Dahlke C."/>
            <person name="Davenport L.B."/>
            <person name="Davies P."/>
            <person name="de Pablos B."/>
            <person name="Delcher A."/>
            <person name="Deng Z."/>
            <person name="Mays A.D."/>
            <person name="Dew I."/>
            <person name="Dietz S.M."/>
            <person name="Dodson K."/>
            <person name="Doup L.E."/>
            <person name="Downes M."/>
            <person name="Dugan-Rocha S."/>
            <person name="Dunkov B.C."/>
            <person name="Dunn P."/>
            <person name="Durbin K.J."/>
            <person name="Evangelista C.C."/>
            <person name="Ferraz C."/>
            <person name="Ferriera S."/>
            <person name="Fleischmann W."/>
            <person name="Fosler C."/>
            <person name="Gabrielian A.E."/>
            <person name="Garg N.S."/>
            <person name="Gelbart W.M."/>
            <person name="Glasser K."/>
            <person name="Glodek A."/>
            <person name="Gong F."/>
            <person name="Gorrell J.H."/>
            <person name="Gu Z."/>
            <person name="Guan P."/>
            <person name="Harris M."/>
            <person name="Harris N.L."/>
            <person name="Harvey D.A."/>
            <person name="Heiman T.J."/>
            <person name="Hernandez J.R."/>
            <person name="Houck J."/>
            <person name="Hostin D."/>
            <person name="Houston K.A."/>
            <person name="Howland T.J."/>
            <person name="Wei M.-H."/>
            <person name="Ibegwam C."/>
            <person name="Jalali M."/>
            <person name="Kalush F."/>
            <person name="Karpen G.H."/>
            <person name="Ke Z."/>
            <person name="Kennison J.A."/>
            <person name="Ketchum K.A."/>
            <person name="Kimmel B.E."/>
            <person name="Kodira C.D."/>
            <person name="Kraft C.L."/>
            <person name="Kravitz S."/>
            <person name="Kulp D."/>
            <person name="Lai Z."/>
            <person name="Lasko P."/>
            <person name="Lei Y."/>
            <person name="Levitsky A.A."/>
            <person name="Li J.H."/>
            <person name="Li Z."/>
            <person name="Liang Y."/>
            <person name="Lin X."/>
            <person name="Liu X."/>
            <person name="Mattei B."/>
            <person name="McIntosh T.C."/>
            <person name="McLeod M.P."/>
            <person name="McPherson D."/>
            <person name="Merkulov G."/>
            <person name="Milshina N.V."/>
            <person name="Mobarry C."/>
            <person name="Morris J."/>
            <person name="Moshrefi A."/>
            <person name="Mount S.M."/>
            <person name="Moy M."/>
            <person name="Murphy B."/>
            <person name="Murphy L."/>
            <person name="Muzny D.M."/>
            <person name="Nelson D.L."/>
            <person name="Nelson D.R."/>
            <person name="Nelson K.A."/>
            <person name="Nixon K."/>
            <person name="Nusskern D.R."/>
            <person name="Pacleb J.M."/>
            <person name="Palazzolo M."/>
            <person name="Pittman G.S."/>
            <person name="Pan S."/>
            <person name="Pollard J."/>
            <person name="Puri V."/>
            <person name="Reese M.G."/>
            <person name="Reinert K."/>
            <person name="Remington K."/>
            <person name="Saunders R.D.C."/>
            <person name="Scheeler F."/>
            <person name="Shen H."/>
            <person name="Shue B.C."/>
            <person name="Siden-Kiamos I."/>
            <person name="Simpson M."/>
            <person name="Skupski M.P."/>
            <person name="Smith T.J."/>
            <person name="Spier E."/>
            <person name="Spradling A.C."/>
            <person name="Stapleton M."/>
            <person name="Strong R."/>
            <person name="Sun E."/>
            <person name="Svirskas R."/>
            <person name="Tector C."/>
            <person name="Turner R."/>
            <person name="Venter E."/>
            <person name="Wang A.H."/>
            <person name="Wang X."/>
            <person name="Wang Z.-Y."/>
            <person name="Wassarman D.A."/>
            <person name="Weinstock G.M."/>
            <person name="Weissenbach J."/>
            <person name="Williams S.M."/>
            <person name="Woodage T."/>
            <person name="Worley K.C."/>
            <person name="Wu D."/>
            <person name="Yang S."/>
            <person name="Yao Q.A."/>
            <person name="Ye J."/>
            <person name="Yeh R.-F."/>
            <person name="Zaveri J.S."/>
            <person name="Zhan M."/>
            <person name="Zhang G."/>
            <person name="Zhao Q."/>
            <person name="Zheng L."/>
            <person name="Zheng X.H."/>
            <person name="Zhong F.N."/>
            <person name="Zhong W."/>
            <person name="Zhou X."/>
            <person name="Zhu S.C."/>
            <person name="Zhu X."/>
            <person name="Smith H.O."/>
            <person name="Gibbs R.A."/>
            <person name="Myers E.W."/>
            <person name="Rubin G.M."/>
            <person name="Venter J.C."/>
        </authorList>
    </citation>
    <scope>NUCLEOTIDE SEQUENCE [LARGE SCALE GENOMIC DNA]</scope>
    <source>
        <strain evidence="3">Berkeley</strain>
    </source>
</reference>
<reference evidence="8 10" key="2">
    <citation type="journal article" date="2002" name="Genome Biol.">
        <title>Annotation of the Drosophila melanogaster euchromatic genome: a systematic review.</title>
        <authorList>
            <person name="Misra S."/>
            <person name="Crosby M.A."/>
            <person name="Mungall C.J."/>
            <person name="Matthews B.B."/>
            <person name="Campbell K.S."/>
            <person name="Hradecky P."/>
            <person name="Huang Y."/>
            <person name="Kaminker J.S."/>
            <person name="Millburn G.H."/>
            <person name="Prochnik S.E."/>
            <person name="Smith C.D."/>
            <person name="Tupy J.L."/>
            <person name="Whitfield E.J."/>
            <person name="Bayraktaroglu L."/>
            <person name="Berman B.P."/>
            <person name="Bettencourt B.R."/>
            <person name="Celniker S.E."/>
            <person name="de Grey A.D.N.J."/>
            <person name="Drysdale R.A."/>
            <person name="Harris N.L."/>
            <person name="Richter J."/>
            <person name="Russo S."/>
            <person name="Schroeder A.J."/>
            <person name="Shu S.Q."/>
            <person name="Stapleton M."/>
            <person name="Yamada C."/>
            <person name="Ashburner M."/>
            <person name="Gelbart W.M."/>
            <person name="Rubin G.M."/>
            <person name="Lewis S.E."/>
        </authorList>
    </citation>
    <scope>GENOME REANNOTATION</scope>
    <source>
        <strain>Berkeley</strain>
    </source>
</reference>
<reference evidence="9" key="3">
    <citation type="journal article" date="2002" name="Genome Biol.">
        <title>A Drosophila full-length cDNA resource.</title>
        <authorList>
            <person name="Stapleton M."/>
            <person name="Carlson J.W."/>
            <person name="Brokstein P."/>
            <person name="Yu C."/>
            <person name="Champe M."/>
            <person name="George R.A."/>
            <person name="Guarin H."/>
            <person name="Kronmiller B."/>
            <person name="Pacleb J.M."/>
            <person name="Park S."/>
            <person name="Wan K.H."/>
            <person name="Rubin G.M."/>
            <person name="Celniker S.E."/>
        </authorList>
    </citation>
    <scope>NUCLEOTIDE SEQUENCE [LARGE SCALE MRNA]</scope>
    <source>
        <strain evidence="9">Berkeley</strain>
        <tissue evidence="4">Embryo</tissue>
    </source>
</reference>
<reference key="4">
    <citation type="journal article" date="2007" name="Neural Dev.">
        <title>DFsn collaborates with Highwire to down-regulate the Wallenda/DLK kinase and restrain synaptic terminal growth.</title>
        <authorList>
            <person name="Wu C."/>
            <person name="Daniels R.W."/>
            <person name="DiAntonio A."/>
        </authorList>
    </citation>
    <scope>PROTEIN SEQUENCE OF 63-73; 91-114 AND 193-224</scope>
    <scope>FUNCTION</scope>
    <scope>INTERACTION WITH HIW</scope>
    <scope>SUBCELLULAR LOCATION</scope>
    <scope>TISSUE SPECIFICITY</scope>
    <scope>DISRUPTION PHENOTYPE</scope>
    <scope>IDENTIFICATION BY MASS SPECTROMETRY</scope>
</reference>
<reference key="5">
    <citation type="journal article" date="2010" name="Mol. Cell. Biol.">
        <title>Regulation of Drosophila vasa in vivo through paralogous cullin-RING E3 ligase specificity receptors.</title>
        <authorList>
            <person name="Kugler J.M."/>
            <person name="Woo J.S."/>
            <person name="Oh B.H."/>
            <person name="Lasko P."/>
        </authorList>
    </citation>
    <scope>FUNCTION</scope>
    <scope>INTERACTION WITH VAS AND CUL1</scope>
    <scope>SUBCELLULAR LOCATION</scope>
    <scope>TISSUE SPECIFICITY</scope>
    <scope>DEVELOPMENTAL STAGE</scope>
    <scope>MUTAGENESIS OF TYR-239</scope>
</reference>
<reference key="6">
    <citation type="journal article" date="2011" name="Nat. Neurosci.">
        <title>Drosophila Rae1 controls the abundance of the ubiquitin ligase Highwire in post-mitotic neurons.</title>
        <authorList>
            <person name="Tian X."/>
            <person name="Li J."/>
            <person name="Valakh V."/>
            <person name="DiAntonio A."/>
            <person name="Wu C."/>
        </authorList>
    </citation>
    <scope>IDENTIFICATION IN A COMPLEX WITH HIW AND FSN</scope>
    <scope>INTERACTION WITH RAE1</scope>
    <scope>TISSUE SPECIFICITY</scope>
    <scope>IDENTIFICATION BY MASS SPECTROMETRY</scope>
</reference>